<proteinExistence type="evidence at transcript level"/>
<evidence type="ECO:0000250" key="1">
    <source>
        <dbReference type="UniProtKB" id="P02232"/>
    </source>
</evidence>
<evidence type="ECO:0000250" key="2">
    <source>
        <dbReference type="UniProtKB" id="P02234"/>
    </source>
</evidence>
<evidence type="ECO:0000250" key="3">
    <source>
        <dbReference type="UniProtKB" id="P02237"/>
    </source>
</evidence>
<evidence type="ECO:0000250" key="4">
    <source>
        <dbReference type="UniProtKB" id="P02240"/>
    </source>
</evidence>
<evidence type="ECO:0000250" key="5">
    <source>
        <dbReference type="UniProtKB" id="Q3C1F7"/>
    </source>
</evidence>
<evidence type="ECO:0000250" key="6">
    <source>
        <dbReference type="UniProtKB" id="Q43296"/>
    </source>
</evidence>
<evidence type="ECO:0000255" key="7">
    <source>
        <dbReference type="PROSITE-ProRule" id="PRU00238"/>
    </source>
</evidence>
<evidence type="ECO:0000269" key="8">
    <source>
    </source>
</evidence>
<evidence type="ECO:0000305" key="9"/>
<accession>P93849</accession>
<protein>
    <recommendedName>
        <fullName>Leghemoglobin 49</fullName>
    </recommendedName>
    <alternativeName>
        <fullName>VfLb49</fullName>
    </alternativeName>
</protein>
<feature type="initiator methionine" description="Removed" evidence="1">
    <location>
        <position position="1"/>
    </location>
</feature>
<feature type="chain" id="PRO_0000193008" description="Leghemoglobin 49">
    <location>
        <begin position="2"/>
        <end position="146"/>
    </location>
</feature>
<feature type="domain" description="Globin" evidence="7">
    <location>
        <begin position="2"/>
        <end position="146"/>
    </location>
</feature>
<feature type="binding site" evidence="4">
    <location>
        <position position="44"/>
    </location>
    <ligand>
        <name>heme b</name>
        <dbReference type="ChEBI" id="CHEBI:60344"/>
    </ligand>
</feature>
<feature type="binding site" evidence="4">
    <location>
        <position position="61"/>
    </location>
    <ligand>
        <name>O2</name>
        <dbReference type="ChEBI" id="CHEBI:15379"/>
    </ligand>
</feature>
<feature type="binding site" description="proximal binding residue" evidence="7">
    <location>
        <position position="93"/>
    </location>
    <ligand>
        <name>heme b</name>
        <dbReference type="ChEBI" id="CHEBI:60344"/>
    </ligand>
    <ligandPart>
        <name>Fe</name>
        <dbReference type="ChEBI" id="CHEBI:18248"/>
    </ligandPart>
</feature>
<feature type="binding site" evidence="4">
    <location>
        <position position="96"/>
    </location>
    <ligand>
        <name>heme b</name>
        <dbReference type="ChEBI" id="CHEBI:60344"/>
    </ligand>
</feature>
<feature type="modified residue" description="Nitrated tyrosine" evidence="2">
    <location>
        <position position="24"/>
    </location>
</feature>
<feature type="modified residue" description="Nitrated tyrosine" evidence="2">
    <location>
        <position position="29"/>
    </location>
</feature>
<feature type="modified residue" description="Phosphoserine" evidence="5">
    <location>
        <position position="44"/>
    </location>
</feature>
<feature type="modified residue" description="Nitrated tyrosine" evidence="2">
    <location>
        <position position="134"/>
    </location>
</feature>
<dbReference type="EMBL" id="Z54159">
    <property type="protein sequence ID" value="CAA90870.1"/>
    <property type="molecule type" value="mRNA"/>
</dbReference>
<dbReference type="PIR" id="T12132">
    <property type="entry name" value="T12132"/>
</dbReference>
<dbReference type="SMR" id="P93849"/>
<dbReference type="GO" id="GO:0005829">
    <property type="term" value="C:cytosol"/>
    <property type="evidence" value="ECO:0007669"/>
    <property type="project" value="UniProtKB-SubCell"/>
</dbReference>
<dbReference type="GO" id="GO:0005634">
    <property type="term" value="C:nucleus"/>
    <property type="evidence" value="ECO:0007669"/>
    <property type="project" value="UniProtKB-SubCell"/>
</dbReference>
<dbReference type="GO" id="GO:0020037">
    <property type="term" value="F:heme binding"/>
    <property type="evidence" value="ECO:0007669"/>
    <property type="project" value="InterPro"/>
</dbReference>
<dbReference type="GO" id="GO:0046872">
    <property type="term" value="F:metal ion binding"/>
    <property type="evidence" value="ECO:0007669"/>
    <property type="project" value="UniProtKB-KW"/>
</dbReference>
<dbReference type="GO" id="GO:0019825">
    <property type="term" value="F:oxygen binding"/>
    <property type="evidence" value="ECO:0007669"/>
    <property type="project" value="InterPro"/>
</dbReference>
<dbReference type="GO" id="GO:0005344">
    <property type="term" value="F:oxygen carrier activity"/>
    <property type="evidence" value="ECO:0007669"/>
    <property type="project" value="UniProtKB-KW"/>
</dbReference>
<dbReference type="GO" id="GO:0009877">
    <property type="term" value="P:nodulation"/>
    <property type="evidence" value="ECO:0007669"/>
    <property type="project" value="UniProtKB-KW"/>
</dbReference>
<dbReference type="GO" id="GO:0009737">
    <property type="term" value="P:response to abscisic acid"/>
    <property type="evidence" value="ECO:0007669"/>
    <property type="project" value="UniProtKB-ARBA"/>
</dbReference>
<dbReference type="Gene3D" id="1.10.490.10">
    <property type="entry name" value="Globins"/>
    <property type="match status" value="1"/>
</dbReference>
<dbReference type="InterPro" id="IPR000971">
    <property type="entry name" value="Globin"/>
</dbReference>
<dbReference type="InterPro" id="IPR009050">
    <property type="entry name" value="Globin-like_sf"/>
</dbReference>
<dbReference type="InterPro" id="IPR012292">
    <property type="entry name" value="Globin/Proto"/>
</dbReference>
<dbReference type="InterPro" id="IPR001032">
    <property type="entry name" value="Leghaemoglobin-like"/>
</dbReference>
<dbReference type="InterPro" id="IPR019824">
    <property type="entry name" value="Leghaemoglobin_Fe_BS"/>
</dbReference>
<dbReference type="PANTHER" id="PTHR22924">
    <property type="entry name" value="LEGHEMOGLOBIN-RELATED"/>
    <property type="match status" value="1"/>
</dbReference>
<dbReference type="PANTHER" id="PTHR22924:SF92">
    <property type="entry name" value="NON-SYMBIOTIC HEMOGLOBIN 2"/>
    <property type="match status" value="1"/>
</dbReference>
<dbReference type="Pfam" id="PF00042">
    <property type="entry name" value="Globin"/>
    <property type="match status" value="1"/>
</dbReference>
<dbReference type="PRINTS" id="PR00188">
    <property type="entry name" value="PLANTGLOBIN"/>
</dbReference>
<dbReference type="SUPFAM" id="SSF46458">
    <property type="entry name" value="Globin-like"/>
    <property type="match status" value="1"/>
</dbReference>
<dbReference type="PROSITE" id="PS01033">
    <property type="entry name" value="GLOBIN"/>
    <property type="match status" value="1"/>
</dbReference>
<dbReference type="PROSITE" id="PS00208">
    <property type="entry name" value="PLANT_GLOBIN"/>
    <property type="match status" value="1"/>
</dbReference>
<comment type="function">
    <text evidence="3 6">Leghemoglobin that reversibly binds oxygen O(2) through a pentacoordinated heme iron (By similarity). In root nodules, facilitates the diffusion of oxygen to the bacteroids while preventing the bacterial nitrogenase from being inactivated by buffering dioxygen, nitric oxide and carbon monoxide, and promoting the formation of reactive oxygen species (ROS, e.g. H(2)O(2)) (By similarity). This role is essential for symbiotic nitrogen fixation (SNF) (By similarity).</text>
</comment>
<comment type="subunit">
    <text evidence="4">Monomer.</text>
</comment>
<comment type="subcellular location">
    <subcellularLocation>
        <location evidence="4">Cytoplasm</location>
        <location evidence="4">Cytosol</location>
    </subcellularLocation>
    <subcellularLocation>
        <location evidence="4">Nucleus</location>
    </subcellularLocation>
</comment>
<comment type="tissue specificity">
    <text evidence="8">Accumulates in root nodules after inoculation by bacteria of the genus Rhizobium.</text>
</comment>
<comment type="PTM">
    <text evidence="2">Nitrated in effective nodules and particularly in hypoxic conditions; this mechanism may play a protective role in the symbiosis by buffering toxic peroxynitrite NO(2)(-). Nitration level decrease during nodule senescence.</text>
</comment>
<comment type="PTM">
    <text evidence="5">Phosphorylation at Ser-44 disrupts the molecular environment of its porphyrin ring oxygen binding pocket, thus leading to a reduced oxygen consumption and to the delivery of oxygen O(2) to symbiosomes.</text>
</comment>
<comment type="similarity">
    <text evidence="9">Belongs to the plant globin family.</text>
</comment>
<keyword id="KW-0963">Cytoplasm</keyword>
<keyword id="KW-0349">Heme</keyword>
<keyword id="KW-0408">Iron</keyword>
<keyword id="KW-0479">Metal-binding</keyword>
<keyword id="KW-0944">Nitration</keyword>
<keyword id="KW-0535">Nitrogen fixation</keyword>
<keyword id="KW-0536">Nodulation</keyword>
<keyword id="KW-0539">Nucleus</keyword>
<keyword id="KW-0561">Oxygen transport</keyword>
<keyword id="KW-0597">Phosphoprotein</keyword>
<keyword id="KW-0813">Transport</keyword>
<reference key="1">
    <citation type="journal article" date="1997" name="Mol. Plant Microbe Interact.">
        <title>The Vicia faba leghemoglobin gene VfLb29 is induced in root nodules and in roots colonized by the arbuscular mycorrhizal fungus Glomus fasciculatum.</title>
        <authorList>
            <person name="Fruehling M."/>
            <person name="Roussel H."/>
            <person name="Gianinazzi-Pearson V."/>
            <person name="Puehler A."/>
            <person name="Perlick A.M."/>
        </authorList>
    </citation>
    <scope>NUCLEOTIDE SEQUENCE [MRNA]</scope>
    <scope>TISSUE SPECIFICITY</scope>
    <source>
        <strain>cv. Kleine Thueringer</strain>
        <tissue>Root nodule</tissue>
    </source>
</reference>
<organism>
    <name type="scientific">Vicia faba</name>
    <name type="common">Broad bean</name>
    <name type="synonym">Faba vulgaris</name>
    <dbReference type="NCBI Taxonomy" id="3906"/>
    <lineage>
        <taxon>Eukaryota</taxon>
        <taxon>Viridiplantae</taxon>
        <taxon>Streptophyta</taxon>
        <taxon>Embryophyta</taxon>
        <taxon>Tracheophyta</taxon>
        <taxon>Spermatophyta</taxon>
        <taxon>Magnoliopsida</taxon>
        <taxon>eudicotyledons</taxon>
        <taxon>Gunneridae</taxon>
        <taxon>Pentapetalae</taxon>
        <taxon>rosids</taxon>
        <taxon>fabids</taxon>
        <taxon>Fabales</taxon>
        <taxon>Fabaceae</taxon>
        <taxon>Papilionoideae</taxon>
        <taxon>50 kb inversion clade</taxon>
        <taxon>NPAAA clade</taxon>
        <taxon>Hologalegina</taxon>
        <taxon>IRL clade</taxon>
        <taxon>Fabeae</taxon>
        <taxon>Vicia</taxon>
    </lineage>
</organism>
<sequence length="146" mass="15875">MGFTQQQEALVNSSWESFKQNPSYSVLFYTIILEKAPAAKGMFSFLKDSAGVVDSPKLQAHAEQVFGMVRDSAIQLQATGEVVLKNGSLGAIHIQKGVVDPHFVVVKEALLKTIKEASGDKWSEELSIAWEVAYDGLATAIKKAMS</sequence>
<name>LGB3_VICFA</name>